<accession>Q6F059</accession>
<accession>Q8KYG8</accession>
<accession>Q9RN23</accession>
<reference key="1">
    <citation type="journal article" date="1999" name="J. Appl. Microbiol.">
        <title>Sequence, assembly and analysis of pXO1 and pXO2.</title>
        <authorList>
            <person name="Okinaka R.T."/>
            <person name="Cloud K."/>
            <person name="Hampton O."/>
            <person name="Hoffmaster A."/>
            <person name="Hill K.K."/>
            <person name="Keim P."/>
            <person name="Koehler T."/>
            <person name="Lamke G."/>
            <person name="Kumano S."/>
            <person name="Manter D."/>
            <person name="Martinez Y."/>
            <person name="Ricke D."/>
            <person name="Svensson R."/>
            <person name="Jackson P.J."/>
        </authorList>
    </citation>
    <scope>NUCLEOTIDE SEQUENCE [GENOMIC DNA]</scope>
    <source>
        <strain>Pasteur</strain>
    </source>
</reference>
<reference key="2">
    <citation type="journal article" date="2002" name="Science">
        <title>Comparative genome sequencing for discovery of novel polymorphisms in Bacillus anthracis.</title>
        <authorList>
            <person name="Read T.D."/>
            <person name="Salzberg S.L."/>
            <person name="Pop M."/>
            <person name="Shumway M.F."/>
            <person name="Umayam L."/>
            <person name="Jiang L."/>
            <person name="Holtzapple E."/>
            <person name="Busch J.D."/>
            <person name="Smith K.L."/>
            <person name="Schupp J.M."/>
            <person name="Solomon D."/>
            <person name="Keim P."/>
            <person name="Fraser C.M."/>
        </authorList>
    </citation>
    <scope>NUCLEOTIDE SEQUENCE [GENOMIC DNA]</scope>
    <source>
        <strain>Ames / isolate Florida / A2012</strain>
    </source>
</reference>
<reference key="3">
    <citation type="journal article" date="2009" name="J. Bacteriol.">
        <title>The complete genome sequence of Bacillus anthracis Ames 'Ancestor'.</title>
        <authorList>
            <person name="Ravel J."/>
            <person name="Jiang L."/>
            <person name="Stanley S.T."/>
            <person name="Wilson M.R."/>
            <person name="Decker R.S."/>
            <person name="Read T.D."/>
            <person name="Worsham P."/>
            <person name="Keim P.S."/>
            <person name="Salzberg S.L."/>
            <person name="Fraser-Liggett C.M."/>
            <person name="Rasko D.A."/>
        </authorList>
    </citation>
    <scope>NUCLEOTIDE SEQUENCE [LARGE SCALE GENOMIC DNA]</scope>
    <source>
        <strain>Ames ancestor</strain>
    </source>
</reference>
<sequence>MVKLGKKEQQKYRTEGYDLDFISRVQPQGGIKFNEKYIAQGDCYVACLHVYSLAEDIPPLWLTALMNNKDTISSVDVATANKEEVVKDINRSITELKDRMTSERRSTDRDDAHWELQNLTDFARSITQQGEIVKLVKLRIYIYDPVLEQLEKRIGDIKKEIAGQNYKAQVYVFKQKEEWQTLFASYDDQIEYLGVKSGYPLPSKNIGFGIPFHHQDLKDPRGIYLGQTSTGGAFILDPFFSTGTRTSFSGFIFGKMGAGKSTLLKQLEEGLVAKDCFIRGFDKARDYYTVVQQQGGKIIDLSGVQDSEEVETGMINPLEVFATKITNTGAVDEKGSFIQHISKVTNMIRFLNTEFDDTVIQEFRKHLYAFYIEWGLVPQKGSDRPYKVTGYPPNHYPILEDFYKYLSNLKLEAGATPQRHRDLEAIKLQVEDMITVYGDMFNGHTTLKNFENEQIVFFDIDGISKYDKSVFNCQLFTALTLIWSHALKNGRQMKYLREEKNLSIEDVKYFMVFLDECHNVINSQNEFANRYVLEFEREMRKFFAGIFFATQSPQEMLPPPGSTVDVSTMKAIFELTQYKIFLNMDNSVLETLKSVLGESLTESEFRILPELKRGEAIVQVSSTETYNVMFDPDEKQLERFKGGQ</sequence>
<name>Y6508_BACAN</name>
<feature type="chain" id="PRO_0000216830" description="Uncharacterized protein pXO2-09/BXB0008/GBAA_pXO2_0008">
    <location>
        <begin position="1"/>
        <end position="644"/>
    </location>
</feature>
<feature type="binding site" evidence="1">
    <location>
        <begin position="254"/>
        <end position="261"/>
    </location>
    <ligand>
        <name>ATP</name>
        <dbReference type="ChEBI" id="CHEBI:30616"/>
    </ligand>
</feature>
<dbReference type="EMBL" id="AF188935">
    <property type="protein sequence ID" value="AAF13614.1"/>
    <property type="status" value="ALT_INIT"/>
    <property type="molecule type" value="Genomic_DNA"/>
</dbReference>
<dbReference type="EMBL" id="AE011191">
    <property type="protein sequence ID" value="AAM26169.1"/>
    <property type="molecule type" value="Genomic_DNA"/>
</dbReference>
<dbReference type="EMBL" id="AE017335">
    <property type="protein sequence ID" value="AAT28938.2"/>
    <property type="molecule type" value="Genomic_DNA"/>
</dbReference>
<dbReference type="RefSeq" id="NP_053164.1">
    <property type="nucleotide sequence ID" value="NC_002146.1"/>
</dbReference>
<dbReference type="RefSeq" id="WP_000239778.1">
    <property type="nucleotide sequence ID" value="NZ_VTZL01000009.1"/>
</dbReference>
<dbReference type="SMR" id="Q6F059"/>
<dbReference type="GeneID" id="45025323"/>
<dbReference type="KEGG" id="banh:HYU01_29040"/>
<dbReference type="KEGG" id="bar:GBAA_pXO2_0008"/>
<dbReference type="HOGENOM" id="CLU_017194_1_0_9"/>
<dbReference type="OMA" id="DPENEYT"/>
<dbReference type="Proteomes" id="UP000000594">
    <property type="component" value="Plasmid pXO2"/>
</dbReference>
<dbReference type="GO" id="GO:0005524">
    <property type="term" value="F:ATP binding"/>
    <property type="evidence" value="ECO:0007669"/>
    <property type="project" value="UniProtKB-KW"/>
</dbReference>
<dbReference type="Gene3D" id="3.40.50.300">
    <property type="entry name" value="P-loop containing nucleotide triphosphate hydrolases"/>
    <property type="match status" value="2"/>
</dbReference>
<dbReference type="InterPro" id="IPR027417">
    <property type="entry name" value="P-loop_NTPase"/>
</dbReference>
<dbReference type="InterPro" id="IPR051162">
    <property type="entry name" value="T4SS_component"/>
</dbReference>
<dbReference type="PANTHER" id="PTHR30121:SF6">
    <property type="entry name" value="SLR6007 PROTEIN"/>
    <property type="match status" value="1"/>
</dbReference>
<dbReference type="PANTHER" id="PTHR30121">
    <property type="entry name" value="UNCHARACTERIZED PROTEIN YJGR-RELATED"/>
    <property type="match status" value="1"/>
</dbReference>
<dbReference type="SUPFAM" id="SSF52540">
    <property type="entry name" value="P-loop containing nucleoside triphosphate hydrolases"/>
    <property type="match status" value="1"/>
</dbReference>
<gene>
    <name type="ordered locus">pXO2-09</name>
    <name type="ordered locus">BXB0008</name>
    <name type="ordered locus">GBAA_pXO2_0008</name>
</gene>
<organism>
    <name type="scientific">Bacillus anthracis</name>
    <dbReference type="NCBI Taxonomy" id="1392"/>
    <lineage>
        <taxon>Bacteria</taxon>
        <taxon>Bacillati</taxon>
        <taxon>Bacillota</taxon>
        <taxon>Bacilli</taxon>
        <taxon>Bacillales</taxon>
        <taxon>Bacillaceae</taxon>
        <taxon>Bacillus</taxon>
        <taxon>Bacillus cereus group</taxon>
    </lineage>
</organism>
<proteinExistence type="predicted"/>
<comment type="sequence caution" evidence="2">
    <conflict type="erroneous initiation">
        <sequence resource="EMBL-CDS" id="AAF13614"/>
    </conflict>
</comment>
<protein>
    <recommendedName>
        <fullName>Uncharacterized protein pXO2-09/BXB0008/GBAA_pXO2_0008</fullName>
    </recommendedName>
</protein>
<evidence type="ECO:0000255" key="1"/>
<evidence type="ECO:0000305" key="2"/>
<geneLocation type="plasmid">
    <name>pXO2</name>
</geneLocation>
<keyword id="KW-0067">ATP-binding</keyword>
<keyword id="KW-0547">Nucleotide-binding</keyword>
<keyword id="KW-0614">Plasmid</keyword>
<keyword id="KW-1185">Reference proteome</keyword>